<feature type="initiator methionine" description="Removed" evidence="2">
    <location>
        <position position="1"/>
    </location>
</feature>
<feature type="chain" id="PRO_0000054202" description="Gamma-aminobutyric acid permease">
    <location>
        <begin position="2"/>
        <end position="466"/>
    </location>
</feature>
<feature type="topological domain" description="Cytoplasmic" evidence="8">
    <location>
        <begin position="2"/>
        <end position="20"/>
    </location>
</feature>
<feature type="transmembrane region" description="Helical" evidence="1">
    <location>
        <begin position="21"/>
        <end position="41"/>
    </location>
</feature>
<feature type="transmembrane region" description="Helical" evidence="1">
    <location>
        <begin position="42"/>
        <end position="62"/>
    </location>
</feature>
<feature type="topological domain" description="Cytoplasmic" evidence="8">
    <location>
        <begin position="63"/>
        <end position="96"/>
    </location>
</feature>
<feature type="transmembrane region" description="Helical" evidence="1">
    <location>
        <begin position="97"/>
        <end position="117"/>
    </location>
</feature>
<feature type="topological domain" description="Periplasmic" evidence="8">
    <location>
        <position position="118"/>
    </location>
</feature>
<feature type="transmembrane region" description="Helical" evidence="1">
    <location>
        <begin position="119"/>
        <end position="139"/>
    </location>
</feature>
<feature type="topological domain" description="Cytoplasmic" evidence="8">
    <location>
        <begin position="140"/>
        <end position="153"/>
    </location>
</feature>
<feature type="transmembrane region" description="Helical" evidence="1">
    <location>
        <begin position="154"/>
        <end position="174"/>
    </location>
</feature>
<feature type="topological domain" description="Periplasmic" evidence="8">
    <location>
        <begin position="175"/>
        <end position="199"/>
    </location>
</feature>
<feature type="transmembrane region" description="Helical" evidence="1">
    <location>
        <begin position="200"/>
        <end position="220"/>
    </location>
</feature>
<feature type="topological domain" description="Cytoplasmic" evidence="8">
    <location>
        <begin position="221"/>
        <end position="246"/>
    </location>
</feature>
<feature type="transmembrane region" description="Helical" evidence="1">
    <location>
        <begin position="247"/>
        <end position="267"/>
    </location>
</feature>
<feature type="topological domain" description="Periplasmic" evidence="8">
    <location>
        <begin position="268"/>
        <end position="286"/>
    </location>
</feature>
<feature type="transmembrane region" description="Helical" evidence="1">
    <location>
        <begin position="287"/>
        <end position="307"/>
    </location>
</feature>
<feature type="topological domain" description="Cytoplasmic" evidence="8">
    <location>
        <begin position="308"/>
        <end position="334"/>
    </location>
</feature>
<feature type="transmembrane region" description="Helical" evidence="1">
    <location>
        <begin position="335"/>
        <end position="355"/>
    </location>
</feature>
<feature type="topological domain" description="Periplasmic" evidence="8">
    <location>
        <begin position="356"/>
        <end position="358"/>
    </location>
</feature>
<feature type="transmembrane region" description="Helical" evidence="1">
    <location>
        <begin position="359"/>
        <end position="379"/>
    </location>
</feature>
<feature type="topological domain" description="Cytoplasmic" evidence="8">
    <location>
        <begin position="380"/>
        <end position="402"/>
    </location>
</feature>
<feature type="transmembrane region" description="Helical" evidence="1">
    <location>
        <begin position="403"/>
        <end position="423"/>
    </location>
</feature>
<feature type="topological domain" description="Periplasmic" evidence="8">
    <location>
        <begin position="424"/>
        <end position="428"/>
    </location>
</feature>
<feature type="transmembrane region" description="Helical" evidence="1">
    <location>
        <begin position="429"/>
        <end position="449"/>
    </location>
</feature>
<feature type="topological domain" description="Cytoplasmic" evidence="5 8">
    <location>
        <begin position="450"/>
        <end position="466"/>
    </location>
</feature>
<feature type="sequence conflict" description="In Ref. 2; CAA46229." evidence="12" ref="2">
    <original>T</original>
    <variation>R</variation>
    <location>
        <position position="72"/>
    </location>
</feature>
<feature type="sequence conflict" description="In Ref. 2; CAA46229." evidence="12" ref="2">
    <original>MR</original>
    <variation>IG</variation>
    <location>
        <begin position="385"/>
        <end position="386"/>
    </location>
</feature>
<keyword id="KW-0029">Amino-acid transport</keyword>
<keyword id="KW-0997">Cell inner membrane</keyword>
<keyword id="KW-1003">Cell membrane</keyword>
<keyword id="KW-0903">Direct protein sequencing</keyword>
<keyword id="KW-0472">Membrane</keyword>
<keyword id="KW-1185">Reference proteome</keyword>
<keyword id="KW-0812">Transmembrane</keyword>
<keyword id="KW-1133">Transmembrane helix</keyword>
<keyword id="KW-0813">Transport</keyword>
<organism>
    <name type="scientific">Escherichia coli (strain K12)</name>
    <dbReference type="NCBI Taxonomy" id="83333"/>
    <lineage>
        <taxon>Bacteria</taxon>
        <taxon>Pseudomonadati</taxon>
        <taxon>Pseudomonadota</taxon>
        <taxon>Gammaproteobacteria</taxon>
        <taxon>Enterobacterales</taxon>
        <taxon>Enterobacteriaceae</taxon>
        <taxon>Escherichia</taxon>
    </lineage>
</organism>
<name>GABP_ECOLI</name>
<proteinExistence type="evidence at protein level"/>
<comment type="function">
    <text evidence="6 7">Transporter for gamma-aminobutyrate (GABA) (PubMed:8297211, PubMed:8557687). Transport is driven by the membrane potential (PubMed:8297211). Can also transport a number of GABA analogs such as nipecotic acid or muscimol (PubMed:8557687).</text>
</comment>
<comment type="catalytic activity">
    <reaction evidence="6">
        <text>4-aminobutanoate(in) + H(+)(in) = 4-aminobutanoate(out) + H(+)(out)</text>
        <dbReference type="Rhea" id="RHEA:28915"/>
        <dbReference type="ChEBI" id="CHEBI:15378"/>
        <dbReference type="ChEBI" id="CHEBI:59888"/>
    </reaction>
</comment>
<comment type="activity regulation">
    <text evidence="4 6">Uptake is stimulated by ammonium sulfate and abolished by 2,4-dinitrophenol (PubMed:8297211). Is affected both topologically and kinetically by phospholipid composition of the membrane (PubMed:15890647). In cells lacking phosphatidylethanolamine (PE), the N-terminal hairpin is inverted relative to the membrane and the rate of GABA transport is reduced by more than 99% (PubMed:15890647).</text>
</comment>
<comment type="biophysicochemical properties">
    <kinetics>
        <KM evidence="6">11.8 uM for GABA</KM>
        <Vmax evidence="6">0.33 nmol/min/mg enzyme</Vmax>
    </kinetics>
</comment>
<comment type="pathway">
    <text>Amino-acid degradation; 4-aminobutanoate degradation.</text>
</comment>
<comment type="subunit">
    <text evidence="2">Monomer.</text>
</comment>
<comment type="subcellular location">
    <subcellularLocation>
        <location evidence="2 5 8">Cell inner membrane</location>
        <topology evidence="8">Multi-pass membrane protein</topology>
    </subcellularLocation>
</comment>
<comment type="induction">
    <text evidence="3">Induced by RpoS, but not in response to multiple stress conditions.</text>
</comment>
<comment type="similarity">
    <text evidence="12">Belongs to the amino acid-polyamine-organocation (APC) superfamily. Amino acid transporter (AAT) (TC 2.A.3.1) family.</text>
</comment>
<accession>P25527</accession>
<protein>
    <recommendedName>
        <fullName evidence="11">Gamma-aminobutyric acid permease</fullName>
        <shortName evidence="9">GABA permease</shortName>
    </recommendedName>
    <alternativeName>
        <fullName evidence="10">4-aminobutyrate carrier</fullName>
    </alternativeName>
    <alternativeName>
        <fullName evidence="12">4-aminobutyrate permease</fullName>
    </alternativeName>
    <alternativeName>
        <fullName evidence="12">Gamma-aminobutyrate permease</fullName>
    </alternativeName>
</protein>
<reference key="1">
    <citation type="journal article" date="1993" name="Arch. Microbiol.">
        <title>Molecular organization of the Escherichia coli gab cluster: nucleotide sequence of the structural genes gabD and gabP and expression of the GABA permease gene.</title>
        <authorList>
            <person name="Niegemann E."/>
            <person name="Schulz A."/>
            <person name="Bartsch K."/>
        </authorList>
    </citation>
    <scope>NUCLEOTIDE SEQUENCE [GENOMIC DNA]</scope>
    <scope>FUNCTION</scope>
    <scope>CATALYTIC ACTIVITY</scope>
    <scope>ACTIVITY REGULATION</scope>
    <scope>BIOPHYSICOCHEMICAL PROPERTIES</scope>
    <source>
        <strain>K12 / JM103 / ATCC 39403 / DSM 2829 / KCTC 1112 / NCIMB 12044</strain>
    </source>
</reference>
<reference key="2">
    <citation type="submission" date="1992-03" db="EMBL/GenBank/DDBJ databases">
        <authorList>
            <person name="Metzer E."/>
            <person name="Halpern Y.S."/>
        </authorList>
    </citation>
    <scope>NUCLEOTIDE SEQUENCE [GENOMIC DNA]</scope>
    <source>
        <strain>K12 / CS101B</strain>
    </source>
</reference>
<reference key="3">
    <citation type="journal article" date="1997" name="DNA Res.">
        <title>Construction of a contiguous 874-kb sequence of the Escherichia coli-K12 genome corresponding to 50.0-68.8 min on the linkage map and analysis of its sequence features.</title>
        <authorList>
            <person name="Yamamoto Y."/>
            <person name="Aiba H."/>
            <person name="Baba T."/>
            <person name="Hayashi K."/>
            <person name="Inada T."/>
            <person name="Isono K."/>
            <person name="Itoh T."/>
            <person name="Kimura S."/>
            <person name="Kitagawa M."/>
            <person name="Makino K."/>
            <person name="Miki T."/>
            <person name="Mitsuhashi N."/>
            <person name="Mizobuchi K."/>
            <person name="Mori H."/>
            <person name="Nakade S."/>
            <person name="Nakamura Y."/>
            <person name="Nashimoto H."/>
            <person name="Oshima T."/>
            <person name="Oyama S."/>
            <person name="Saito N."/>
            <person name="Sampei G."/>
            <person name="Satoh Y."/>
            <person name="Sivasundaram S."/>
            <person name="Tagami H."/>
            <person name="Takahashi H."/>
            <person name="Takeda J."/>
            <person name="Takemoto K."/>
            <person name="Uehara K."/>
            <person name="Wada C."/>
            <person name="Yamagata S."/>
            <person name="Horiuchi T."/>
        </authorList>
    </citation>
    <scope>NUCLEOTIDE SEQUENCE [LARGE SCALE GENOMIC DNA]</scope>
    <source>
        <strain>K12 / W3110 / ATCC 27325 / DSM 5911</strain>
    </source>
</reference>
<reference key="4">
    <citation type="journal article" date="1997" name="Science">
        <title>The complete genome sequence of Escherichia coli K-12.</title>
        <authorList>
            <person name="Blattner F.R."/>
            <person name="Plunkett G. III"/>
            <person name="Bloch C.A."/>
            <person name="Perna N.T."/>
            <person name="Burland V."/>
            <person name="Riley M."/>
            <person name="Collado-Vides J."/>
            <person name="Glasner J.D."/>
            <person name="Rode C.K."/>
            <person name="Mayhew G.F."/>
            <person name="Gregor J."/>
            <person name="Davis N.W."/>
            <person name="Kirkpatrick H.A."/>
            <person name="Goeden M.A."/>
            <person name="Rose D.J."/>
            <person name="Mau B."/>
            <person name="Shao Y."/>
        </authorList>
    </citation>
    <scope>NUCLEOTIDE SEQUENCE [LARGE SCALE GENOMIC DNA]</scope>
    <source>
        <strain>K12 / MG1655 / ATCC 47076</strain>
    </source>
</reference>
<reference key="5">
    <citation type="journal article" date="2006" name="Mol. Syst. Biol.">
        <title>Highly accurate genome sequences of Escherichia coli K-12 strains MG1655 and W3110.</title>
        <authorList>
            <person name="Hayashi K."/>
            <person name="Morooka N."/>
            <person name="Yamamoto Y."/>
            <person name="Fujita K."/>
            <person name="Isono K."/>
            <person name="Choi S."/>
            <person name="Ohtsubo E."/>
            <person name="Baba T."/>
            <person name="Wanner B.L."/>
            <person name="Mori H."/>
            <person name="Horiuchi T."/>
        </authorList>
    </citation>
    <scope>NUCLEOTIDE SEQUENCE [LARGE SCALE GENOMIC DNA]</scope>
    <source>
        <strain>K12 / W3110 / ATCC 27325 / DSM 5911</strain>
    </source>
</reference>
<reference key="6">
    <citation type="journal article" date="2001" name="FEBS Lett.">
        <title>Monomeric state and ligand binding of recombinant GABA transporter from Escherichia coli.</title>
        <authorList>
            <person name="Li X.D."/>
            <person name="Villa A."/>
            <person name="Gownley C."/>
            <person name="Kim M.J."/>
            <person name="Song J."/>
            <person name="Auer M."/>
            <person name="Wang D.N."/>
        </authorList>
    </citation>
    <scope>PROTEIN SEQUENCE OF 2-11</scope>
    <scope>IDENTIFICATION BY MASS SPECTROMETRY</scope>
    <scope>SUBUNIT</scope>
    <scope>SUBCELLULAR LOCATION</scope>
</reference>
<reference key="7">
    <citation type="journal article" date="1996" name="J. Biol. Chem.">
        <title>Substrate specificity of the Escherichia coli 4-aminobutyrate carrier encoded by gabP. Uptake and counterflow of structurally diverse molecules.</title>
        <authorList>
            <person name="Brechtel C.E."/>
            <person name="Hu L."/>
            <person name="King S.C."/>
        </authorList>
    </citation>
    <scope>FUNCTION</scope>
</reference>
<reference key="8">
    <citation type="journal article" date="1998" name="Biochem. J.">
        <title>Membrane topology of the Escherichia coli gamma-aminobutyrate transporter: implications on the topography and mechanism of prokaryotic and eukaryotic transporters from the APC superfamily.</title>
        <authorList>
            <person name="Hu L.A."/>
            <person name="King S.C."/>
        </authorList>
    </citation>
    <scope>SUBCELLULAR LOCATION</scope>
    <scope>TOPOLOGY</scope>
</reference>
<reference key="9">
    <citation type="journal article" date="2004" name="Mol. Microbiol.">
        <title>Multiple stress signal integration in the regulation of the complex sigma S-dependent csiD-ygaF-gabDTP operon in Escherichia coli.</title>
        <authorList>
            <person name="Metzner M."/>
            <person name="Germer J."/>
            <person name="Hengge R."/>
        </authorList>
    </citation>
    <scope>INDUCTION</scope>
    <source>
        <strain>K12 / MC4100 / ATCC 35695 / DSM 6574</strain>
    </source>
</reference>
<reference key="10">
    <citation type="journal article" date="2005" name="J. Biol. Chem.">
        <title>Phospholipids as determinants of membrane protein topology. Phosphatidylethanolamine is required for the proper topological organization of the gamma-aminobutyric acid permease (GabP) of Escherichia coli.</title>
        <authorList>
            <person name="Zhang W."/>
            <person name="Campbell H.A."/>
            <person name="King S.C."/>
            <person name="Dowhan W."/>
        </authorList>
    </citation>
    <scope>ACTIVITY REGULATION</scope>
</reference>
<reference key="11">
    <citation type="journal article" date="2005" name="Science">
        <title>Global topology analysis of the Escherichia coli inner membrane proteome.</title>
        <authorList>
            <person name="Daley D.O."/>
            <person name="Rapp M."/>
            <person name="Granseth E."/>
            <person name="Melen K."/>
            <person name="Drew D."/>
            <person name="von Heijne G."/>
        </authorList>
    </citation>
    <scope>TOPOLOGY [LARGE SCALE ANALYSIS]</scope>
    <scope>SUBCELLULAR LOCATION</scope>
    <source>
        <strain>K12 / MG1655 / ATCC 47076</strain>
    </source>
</reference>
<gene>
    <name evidence="9" type="primary">gabP</name>
    <name type="ordered locus">b2663</name>
    <name type="ordered locus">JW2638</name>
</gene>
<sequence>MGQSSQPHELGGGLKSRHVTMLSIAGVIGASLFVGSSVAIAEAGPAVLLAYLFAGLLVVMIMRMLAEMAVATPDTGSFSTYADKAIGRWAGYTIGWLYWWFWVLVIPLEANIAAMILHSWVPGIPIWLFSLVITLALTGSNLLSVKNYGEFEFWLALCKVIAILAFIFLGAVAISGFYPYAEVSGISRLWDSGGFMPNGFGAVLSAMLITMFSFMGAEIVTIAAAESDTPEKHIVRATNSVIWRISIFYLCSIFVVVALIPWNMPGLKAVGSYRSVLELLNIPHAKLIMDCVILLSVTSCLNSALYTASRMLYSLSRRGDAPAVMGKINRSKTPYVAVLLSTGAAFLTVVVNYYAPAKVFKFLIDSSGAIALLVYLVIAVSQLRMRKILRAEGSEIRLRMWLYPWLTWLVIGFITFVLVVMLFRPAQQLEVISTGLLAIGIICTVPIMARWKKLVLWQKTPVHNTR</sequence>
<evidence type="ECO:0000255" key="1"/>
<evidence type="ECO:0000269" key="2">
    <source>
    </source>
</evidence>
<evidence type="ECO:0000269" key="3">
    <source>
    </source>
</evidence>
<evidence type="ECO:0000269" key="4">
    <source>
    </source>
</evidence>
<evidence type="ECO:0000269" key="5">
    <source>
    </source>
</evidence>
<evidence type="ECO:0000269" key="6">
    <source>
    </source>
</evidence>
<evidence type="ECO:0000269" key="7">
    <source>
    </source>
</evidence>
<evidence type="ECO:0000269" key="8">
    <source>
    </source>
</evidence>
<evidence type="ECO:0000303" key="9">
    <source>
    </source>
</evidence>
<evidence type="ECO:0000303" key="10">
    <source>
    </source>
</evidence>
<evidence type="ECO:0000303" key="11">
    <source>
    </source>
</evidence>
<evidence type="ECO:0000305" key="12"/>
<dbReference type="EMBL" id="M88334">
    <property type="protein sequence ID" value="AAC36833.1"/>
    <property type="molecule type" value="Genomic_DNA"/>
</dbReference>
<dbReference type="EMBL" id="X65104">
    <property type="protein sequence ID" value="CAA46229.1"/>
    <property type="molecule type" value="Genomic_DNA"/>
</dbReference>
<dbReference type="EMBL" id="U00096">
    <property type="protein sequence ID" value="AAC75710.1"/>
    <property type="molecule type" value="Genomic_DNA"/>
</dbReference>
<dbReference type="EMBL" id="AP009048">
    <property type="protein sequence ID" value="BAA16526.1"/>
    <property type="molecule type" value="Genomic_DNA"/>
</dbReference>
<dbReference type="PIR" id="H65045">
    <property type="entry name" value="H65045"/>
</dbReference>
<dbReference type="RefSeq" id="NP_417149.1">
    <property type="nucleotide sequence ID" value="NC_000913.3"/>
</dbReference>
<dbReference type="RefSeq" id="WP_001295173.1">
    <property type="nucleotide sequence ID" value="NZ_STEB01000042.1"/>
</dbReference>
<dbReference type="SMR" id="P25527"/>
<dbReference type="BioGRID" id="4261470">
    <property type="interactions" value="22"/>
</dbReference>
<dbReference type="DIP" id="DIP-9724N"/>
<dbReference type="FunCoup" id="P25527">
    <property type="interactions" value="152"/>
</dbReference>
<dbReference type="IntAct" id="P25527">
    <property type="interactions" value="2"/>
</dbReference>
<dbReference type="STRING" id="511145.b2663"/>
<dbReference type="TCDB" id="2.A.3.1.4">
    <property type="family name" value="the amino acid-polyamine-organocation (apc) family"/>
</dbReference>
<dbReference type="PaxDb" id="511145-b2663"/>
<dbReference type="EnsemblBacteria" id="AAC75710">
    <property type="protein sequence ID" value="AAC75710"/>
    <property type="gene ID" value="b2663"/>
</dbReference>
<dbReference type="GeneID" id="93779349"/>
<dbReference type="GeneID" id="948049"/>
<dbReference type="KEGG" id="ecj:JW2638"/>
<dbReference type="KEGG" id="eco:b2663"/>
<dbReference type="KEGG" id="ecoc:C3026_14680"/>
<dbReference type="PATRIC" id="fig|1411691.4.peg.4078"/>
<dbReference type="EchoBASE" id="EB1306"/>
<dbReference type="eggNOG" id="COG1113">
    <property type="taxonomic scope" value="Bacteria"/>
</dbReference>
<dbReference type="HOGENOM" id="CLU_007946_9_3_6"/>
<dbReference type="InParanoid" id="P25527"/>
<dbReference type="OMA" id="AITVGYW"/>
<dbReference type="OrthoDB" id="5297508at2"/>
<dbReference type="PhylomeDB" id="P25527"/>
<dbReference type="BioCyc" id="EcoCyc:GABP-MONOMER"/>
<dbReference type="BioCyc" id="MetaCyc:GABP-MONOMER"/>
<dbReference type="UniPathway" id="UPA00733"/>
<dbReference type="PRO" id="PR:P25527"/>
<dbReference type="Proteomes" id="UP000000625">
    <property type="component" value="Chromosome"/>
</dbReference>
<dbReference type="GO" id="GO:0016020">
    <property type="term" value="C:membrane"/>
    <property type="evidence" value="ECO:0000314"/>
    <property type="project" value="EcoCyc"/>
</dbReference>
<dbReference type="GO" id="GO:0005886">
    <property type="term" value="C:plasma membrane"/>
    <property type="evidence" value="ECO:0000314"/>
    <property type="project" value="EcoCyc"/>
</dbReference>
<dbReference type="GO" id="GO:0015185">
    <property type="term" value="F:gamma-aminobutyric acid transmembrane transporter activity"/>
    <property type="evidence" value="ECO:0000315"/>
    <property type="project" value="EcoCyc"/>
</dbReference>
<dbReference type="GO" id="GO:0015291">
    <property type="term" value="F:secondary active transmembrane transporter activity"/>
    <property type="evidence" value="ECO:0000314"/>
    <property type="project" value="EcoCyc"/>
</dbReference>
<dbReference type="GO" id="GO:0006995">
    <property type="term" value="P:cellular response to nitrogen starvation"/>
    <property type="evidence" value="ECO:0000270"/>
    <property type="project" value="EcoCyc"/>
</dbReference>
<dbReference type="GO" id="GO:0006974">
    <property type="term" value="P:DNA damage response"/>
    <property type="evidence" value="ECO:0000270"/>
    <property type="project" value="EcoliWiki"/>
</dbReference>
<dbReference type="GO" id="GO:0009450">
    <property type="term" value="P:gamma-aminobutyric acid catabolic process"/>
    <property type="evidence" value="ECO:0007669"/>
    <property type="project" value="UniProtKB-UniPathway"/>
</dbReference>
<dbReference type="GO" id="GO:0015812">
    <property type="term" value="P:gamma-aminobutyric acid transport"/>
    <property type="evidence" value="ECO:0000315"/>
    <property type="project" value="EcoCyc"/>
</dbReference>
<dbReference type="GO" id="GO:0090549">
    <property type="term" value="P:response to carbon starvation"/>
    <property type="evidence" value="ECO:0000270"/>
    <property type="project" value="EcoCyc"/>
</dbReference>
<dbReference type="FunFam" id="1.20.1740.10:FF:000001">
    <property type="entry name" value="Amino acid permease"/>
    <property type="match status" value="1"/>
</dbReference>
<dbReference type="Gene3D" id="1.20.1740.10">
    <property type="entry name" value="Amino acid/polyamine transporter I"/>
    <property type="match status" value="1"/>
</dbReference>
<dbReference type="InterPro" id="IPR004841">
    <property type="entry name" value="AA-permease/SLC12A_dom"/>
</dbReference>
<dbReference type="InterPro" id="IPR004840">
    <property type="entry name" value="Amino_acid_permease_CS"/>
</dbReference>
<dbReference type="InterPro" id="IPR011265">
    <property type="entry name" value="GABA_permease"/>
</dbReference>
<dbReference type="NCBIfam" id="TIGR01773">
    <property type="entry name" value="GABAperm"/>
    <property type="match status" value="1"/>
</dbReference>
<dbReference type="NCBIfam" id="NF007566">
    <property type="entry name" value="PRK10197.1"/>
    <property type="match status" value="1"/>
</dbReference>
<dbReference type="PANTHER" id="PTHR43495">
    <property type="entry name" value="GABA PERMEASE"/>
    <property type="match status" value="1"/>
</dbReference>
<dbReference type="PANTHER" id="PTHR43495:SF5">
    <property type="entry name" value="GAMMA-AMINOBUTYRIC ACID PERMEASE"/>
    <property type="match status" value="1"/>
</dbReference>
<dbReference type="Pfam" id="PF00324">
    <property type="entry name" value="AA_permease"/>
    <property type="match status" value="1"/>
</dbReference>
<dbReference type="PIRSF" id="PIRSF006060">
    <property type="entry name" value="AA_transporter"/>
    <property type="match status" value="1"/>
</dbReference>
<dbReference type="PROSITE" id="PS00218">
    <property type="entry name" value="AMINO_ACID_PERMEASE_1"/>
    <property type="match status" value="1"/>
</dbReference>